<name>UVRB_THENN</name>
<comment type="function">
    <text evidence="1">The UvrABC repair system catalyzes the recognition and processing of DNA lesions. A damage recognition complex composed of 2 UvrA and 2 UvrB subunits scans DNA for abnormalities. Upon binding of the UvrA(2)B(2) complex to a putative damaged site, the DNA wraps around one UvrB monomer. DNA wrap is dependent on ATP binding by UvrB and probably causes local melting of the DNA helix, facilitating insertion of UvrB beta-hairpin between the DNA strands. Then UvrB probes one DNA strand for the presence of a lesion. If a lesion is found the UvrA subunits dissociate and the UvrB-DNA preincision complex is formed. This complex is subsequently bound by UvrC and the second UvrB is released. If no lesion is found, the DNA wraps around the other UvrB subunit that will check the other stand for damage.</text>
</comment>
<comment type="subunit">
    <text evidence="1">Forms a heterotetramer with UvrA during the search for lesions. Interacts with UvrC in an incision complex.</text>
</comment>
<comment type="subcellular location">
    <subcellularLocation>
        <location evidence="1">Cytoplasm</location>
    </subcellularLocation>
</comment>
<comment type="domain">
    <text evidence="1">The beta-hairpin motif is involved in DNA binding.</text>
</comment>
<comment type="similarity">
    <text evidence="1">Belongs to the UvrB family.</text>
</comment>
<sequence length="664" mass="76581">MFKLVSEFEPTGDQPQAIEKLVEGLNRGMRFQTLLGVTGSGKTFTMANVIARVNRPALVISPNKTLAAQLYQEFKTFFPENRVEFFISYYDYYQPEAYIPTKDLYIEKNADINDVIVRMRMSTLKSVRTRRDVIVVASVSCIYATGDPNDFDRMNIKLSVGERLDVFELAEKLAKIGYQRTEDVSLSGCFRIRGDTLEIYPTYQDEGIRVEFFGDEIDAISLIDRFNRTTLERLDKVIIYPAVEFVTTEEKLRRAIESIKEELRERLAELKKQGKVLEYERLKQRTLNDIELLETMGYCPGIENYSRHFDGRKPGEPPYTLLDYFDDDFVVFIDESHITVPQLRAMYNGDRSRKKNLVEYGFRLPSAYDNRPLTFEEFLKKVGQIVFVSATPGDFELSVSEQVVEQIIRPTGLVDPEVEVRPTRGQVDDLINEIVKVKQRGERALVTVLTKKTAELLSEHLTELGIKSLYLHSELDAIERVEVLKKLRRGDVDVVVGVNLLREGLDLPEVSLVAIMDADTEGFLRSETTLIQIIGRTARNVNGKVIMYADRITNAMKRAIEETNRRRRIQLEYNKKHGITPRSIVKPLEIEVFEQFMVKEEPAEYGDTIKNIFSMKESLSLEEYVALLEEEMYRAASELRYEDAAALRDELFRVKETLKKKKGR</sequence>
<evidence type="ECO:0000255" key="1">
    <source>
        <dbReference type="HAMAP-Rule" id="MF_00204"/>
    </source>
</evidence>
<proteinExistence type="inferred from homology"/>
<feature type="chain" id="PRO_1000200561" description="UvrABC system protein B">
    <location>
        <begin position="1"/>
        <end position="664"/>
    </location>
</feature>
<feature type="domain" description="Helicase ATP-binding" evidence="1">
    <location>
        <begin position="23"/>
        <end position="180"/>
    </location>
</feature>
<feature type="domain" description="Helicase C-terminal" evidence="1">
    <location>
        <begin position="426"/>
        <end position="588"/>
    </location>
</feature>
<feature type="domain" description="UVR" evidence="1">
    <location>
        <begin position="622"/>
        <end position="657"/>
    </location>
</feature>
<feature type="short sequence motif" description="Beta-hairpin">
    <location>
        <begin position="89"/>
        <end position="112"/>
    </location>
</feature>
<feature type="binding site" evidence="1">
    <location>
        <begin position="36"/>
        <end position="43"/>
    </location>
    <ligand>
        <name>ATP</name>
        <dbReference type="ChEBI" id="CHEBI:30616"/>
    </ligand>
</feature>
<gene>
    <name evidence="1" type="primary">uvrB</name>
    <name type="ordered locus">CTN_0951</name>
</gene>
<protein>
    <recommendedName>
        <fullName evidence="1">UvrABC system protein B</fullName>
        <shortName evidence="1">Protein UvrB</shortName>
    </recommendedName>
    <alternativeName>
        <fullName evidence="1">Excinuclease ABC subunit B</fullName>
    </alternativeName>
</protein>
<keyword id="KW-0067">ATP-binding</keyword>
<keyword id="KW-0963">Cytoplasm</keyword>
<keyword id="KW-0227">DNA damage</keyword>
<keyword id="KW-0228">DNA excision</keyword>
<keyword id="KW-0234">DNA repair</keyword>
<keyword id="KW-0267">Excision nuclease</keyword>
<keyword id="KW-0347">Helicase</keyword>
<keyword id="KW-0378">Hydrolase</keyword>
<keyword id="KW-0547">Nucleotide-binding</keyword>
<keyword id="KW-0742">SOS response</keyword>
<accession>B9K844</accession>
<dbReference type="EMBL" id="CP000916">
    <property type="protein sequence ID" value="ACM23127.1"/>
    <property type="molecule type" value="Genomic_DNA"/>
</dbReference>
<dbReference type="RefSeq" id="WP_015919444.1">
    <property type="nucleotide sequence ID" value="NC_011978.1"/>
</dbReference>
<dbReference type="SMR" id="B9K844"/>
<dbReference type="STRING" id="309803.CTN_0951"/>
<dbReference type="KEGG" id="tna:CTN_0951"/>
<dbReference type="eggNOG" id="COG0556">
    <property type="taxonomic scope" value="Bacteria"/>
</dbReference>
<dbReference type="HOGENOM" id="CLU_009621_2_1_0"/>
<dbReference type="Proteomes" id="UP000000445">
    <property type="component" value="Chromosome"/>
</dbReference>
<dbReference type="GO" id="GO:0005737">
    <property type="term" value="C:cytoplasm"/>
    <property type="evidence" value="ECO:0007669"/>
    <property type="project" value="UniProtKB-SubCell"/>
</dbReference>
<dbReference type="GO" id="GO:0009380">
    <property type="term" value="C:excinuclease repair complex"/>
    <property type="evidence" value="ECO:0007669"/>
    <property type="project" value="InterPro"/>
</dbReference>
<dbReference type="GO" id="GO:0005524">
    <property type="term" value="F:ATP binding"/>
    <property type="evidence" value="ECO:0007669"/>
    <property type="project" value="UniProtKB-UniRule"/>
</dbReference>
<dbReference type="GO" id="GO:0016887">
    <property type="term" value="F:ATP hydrolysis activity"/>
    <property type="evidence" value="ECO:0007669"/>
    <property type="project" value="InterPro"/>
</dbReference>
<dbReference type="GO" id="GO:0003677">
    <property type="term" value="F:DNA binding"/>
    <property type="evidence" value="ECO:0007669"/>
    <property type="project" value="UniProtKB-UniRule"/>
</dbReference>
<dbReference type="GO" id="GO:0009381">
    <property type="term" value="F:excinuclease ABC activity"/>
    <property type="evidence" value="ECO:0007669"/>
    <property type="project" value="UniProtKB-UniRule"/>
</dbReference>
<dbReference type="GO" id="GO:0004386">
    <property type="term" value="F:helicase activity"/>
    <property type="evidence" value="ECO:0007669"/>
    <property type="project" value="UniProtKB-KW"/>
</dbReference>
<dbReference type="GO" id="GO:0006289">
    <property type="term" value="P:nucleotide-excision repair"/>
    <property type="evidence" value="ECO:0007669"/>
    <property type="project" value="UniProtKB-UniRule"/>
</dbReference>
<dbReference type="GO" id="GO:0009432">
    <property type="term" value="P:SOS response"/>
    <property type="evidence" value="ECO:0007669"/>
    <property type="project" value="UniProtKB-UniRule"/>
</dbReference>
<dbReference type="CDD" id="cd17916">
    <property type="entry name" value="DEXHc_UvrB"/>
    <property type="match status" value="1"/>
</dbReference>
<dbReference type="CDD" id="cd18790">
    <property type="entry name" value="SF2_C_UvrB"/>
    <property type="match status" value="1"/>
</dbReference>
<dbReference type="Gene3D" id="3.40.50.300">
    <property type="entry name" value="P-loop containing nucleotide triphosphate hydrolases"/>
    <property type="match status" value="3"/>
</dbReference>
<dbReference type="Gene3D" id="4.10.860.10">
    <property type="entry name" value="UVR domain"/>
    <property type="match status" value="1"/>
</dbReference>
<dbReference type="HAMAP" id="MF_00204">
    <property type="entry name" value="UvrB"/>
    <property type="match status" value="1"/>
</dbReference>
<dbReference type="InterPro" id="IPR006935">
    <property type="entry name" value="Helicase/UvrB_N"/>
</dbReference>
<dbReference type="InterPro" id="IPR014001">
    <property type="entry name" value="Helicase_ATP-bd"/>
</dbReference>
<dbReference type="InterPro" id="IPR001650">
    <property type="entry name" value="Helicase_C-like"/>
</dbReference>
<dbReference type="InterPro" id="IPR027417">
    <property type="entry name" value="P-loop_NTPase"/>
</dbReference>
<dbReference type="InterPro" id="IPR001943">
    <property type="entry name" value="UVR_dom"/>
</dbReference>
<dbReference type="InterPro" id="IPR036876">
    <property type="entry name" value="UVR_dom_sf"/>
</dbReference>
<dbReference type="InterPro" id="IPR004807">
    <property type="entry name" value="UvrB"/>
</dbReference>
<dbReference type="InterPro" id="IPR041471">
    <property type="entry name" value="UvrB_inter"/>
</dbReference>
<dbReference type="InterPro" id="IPR024759">
    <property type="entry name" value="UvrB_YAD/RRR_dom"/>
</dbReference>
<dbReference type="NCBIfam" id="NF003673">
    <property type="entry name" value="PRK05298.1"/>
    <property type="match status" value="1"/>
</dbReference>
<dbReference type="NCBIfam" id="TIGR00631">
    <property type="entry name" value="uvrb"/>
    <property type="match status" value="1"/>
</dbReference>
<dbReference type="PANTHER" id="PTHR24029">
    <property type="entry name" value="UVRABC SYSTEM PROTEIN B"/>
    <property type="match status" value="1"/>
</dbReference>
<dbReference type="PANTHER" id="PTHR24029:SF0">
    <property type="entry name" value="UVRABC SYSTEM PROTEIN B"/>
    <property type="match status" value="1"/>
</dbReference>
<dbReference type="Pfam" id="PF00271">
    <property type="entry name" value="Helicase_C"/>
    <property type="match status" value="1"/>
</dbReference>
<dbReference type="Pfam" id="PF04851">
    <property type="entry name" value="ResIII"/>
    <property type="match status" value="1"/>
</dbReference>
<dbReference type="Pfam" id="PF02151">
    <property type="entry name" value="UVR"/>
    <property type="match status" value="1"/>
</dbReference>
<dbReference type="Pfam" id="PF12344">
    <property type="entry name" value="UvrB"/>
    <property type="match status" value="1"/>
</dbReference>
<dbReference type="Pfam" id="PF17757">
    <property type="entry name" value="UvrB_inter"/>
    <property type="match status" value="1"/>
</dbReference>
<dbReference type="SMART" id="SM00487">
    <property type="entry name" value="DEXDc"/>
    <property type="match status" value="1"/>
</dbReference>
<dbReference type="SMART" id="SM00490">
    <property type="entry name" value="HELICc"/>
    <property type="match status" value="1"/>
</dbReference>
<dbReference type="SUPFAM" id="SSF46600">
    <property type="entry name" value="C-terminal UvrC-binding domain of UvrB"/>
    <property type="match status" value="1"/>
</dbReference>
<dbReference type="SUPFAM" id="SSF52540">
    <property type="entry name" value="P-loop containing nucleoside triphosphate hydrolases"/>
    <property type="match status" value="2"/>
</dbReference>
<dbReference type="PROSITE" id="PS51192">
    <property type="entry name" value="HELICASE_ATP_BIND_1"/>
    <property type="match status" value="1"/>
</dbReference>
<dbReference type="PROSITE" id="PS51194">
    <property type="entry name" value="HELICASE_CTER"/>
    <property type="match status" value="1"/>
</dbReference>
<dbReference type="PROSITE" id="PS50151">
    <property type="entry name" value="UVR"/>
    <property type="match status" value="1"/>
</dbReference>
<organism>
    <name type="scientific">Thermotoga neapolitana (strain ATCC 49049 / DSM 4359 / NBRC 107923 / NS-E)</name>
    <dbReference type="NCBI Taxonomy" id="309803"/>
    <lineage>
        <taxon>Bacteria</taxon>
        <taxon>Thermotogati</taxon>
        <taxon>Thermotogota</taxon>
        <taxon>Thermotogae</taxon>
        <taxon>Thermotogales</taxon>
        <taxon>Thermotogaceae</taxon>
        <taxon>Thermotoga</taxon>
    </lineage>
</organism>
<reference key="1">
    <citation type="submission" date="2007-11" db="EMBL/GenBank/DDBJ databases">
        <title>The genome sequence of the hyperthermophilic bacterium Thermotoga neapolitana.</title>
        <authorList>
            <person name="Lim S.K."/>
            <person name="Kim J.S."/>
            <person name="Cha S.H."/>
            <person name="Park B.C."/>
            <person name="Lee D.S."/>
            <person name="Tae H.S."/>
            <person name="Kim S.-J."/>
            <person name="Kim J.J."/>
            <person name="Park K.J."/>
            <person name="Lee S.Y."/>
        </authorList>
    </citation>
    <scope>NUCLEOTIDE SEQUENCE [LARGE SCALE GENOMIC DNA]</scope>
    <source>
        <strain>ATCC 49049 / DSM 4359 / NBRC 107923 / NS-E</strain>
    </source>
</reference>